<accession>Q6HFE9</accession>
<comment type="catalytic activity">
    <reaction evidence="1">
        <text>L-histidine = trans-urocanate + NH4(+)</text>
        <dbReference type="Rhea" id="RHEA:21232"/>
        <dbReference type="ChEBI" id="CHEBI:17771"/>
        <dbReference type="ChEBI" id="CHEBI:28938"/>
        <dbReference type="ChEBI" id="CHEBI:57595"/>
        <dbReference type="EC" id="4.3.1.3"/>
    </reaction>
</comment>
<comment type="pathway">
    <text evidence="1">Amino-acid degradation; L-histidine degradation into L-glutamate; N-formimidoyl-L-glutamate from L-histidine: step 1/3.</text>
</comment>
<comment type="subcellular location">
    <subcellularLocation>
        <location evidence="1">Cytoplasm</location>
    </subcellularLocation>
</comment>
<comment type="PTM">
    <text evidence="1">Contains an active site 4-methylidene-imidazol-5-one (MIO), which is formed autocatalytically by cyclization and dehydration of residues Ala-Ser-Gly.</text>
</comment>
<comment type="similarity">
    <text evidence="1">Belongs to the PAL/histidase family.</text>
</comment>
<reference key="1">
    <citation type="journal article" date="2006" name="J. Bacteriol.">
        <title>Pathogenomic sequence analysis of Bacillus cereus and Bacillus thuringiensis isolates closely related to Bacillus anthracis.</title>
        <authorList>
            <person name="Han C.S."/>
            <person name="Xie G."/>
            <person name="Challacombe J.F."/>
            <person name="Altherr M.R."/>
            <person name="Bhotika S.S."/>
            <person name="Bruce D."/>
            <person name="Campbell C.S."/>
            <person name="Campbell M.L."/>
            <person name="Chen J."/>
            <person name="Chertkov O."/>
            <person name="Cleland C."/>
            <person name="Dimitrijevic M."/>
            <person name="Doggett N.A."/>
            <person name="Fawcett J.J."/>
            <person name="Glavina T."/>
            <person name="Goodwin L.A."/>
            <person name="Hill K.K."/>
            <person name="Hitchcock P."/>
            <person name="Jackson P.J."/>
            <person name="Keim P."/>
            <person name="Kewalramani A.R."/>
            <person name="Longmire J."/>
            <person name="Lucas S."/>
            <person name="Malfatti S."/>
            <person name="McMurry K."/>
            <person name="Meincke L.J."/>
            <person name="Misra M."/>
            <person name="Moseman B.L."/>
            <person name="Mundt M."/>
            <person name="Munk A.C."/>
            <person name="Okinaka R.T."/>
            <person name="Parson-Quintana B."/>
            <person name="Reilly L.P."/>
            <person name="Richardson P."/>
            <person name="Robinson D.L."/>
            <person name="Rubin E."/>
            <person name="Saunders E."/>
            <person name="Tapia R."/>
            <person name="Tesmer J.G."/>
            <person name="Thayer N."/>
            <person name="Thompson L.S."/>
            <person name="Tice H."/>
            <person name="Ticknor L.O."/>
            <person name="Wills P.L."/>
            <person name="Brettin T.S."/>
            <person name="Gilna P."/>
        </authorList>
    </citation>
    <scope>NUCLEOTIDE SEQUENCE [LARGE SCALE GENOMIC DNA]</scope>
    <source>
        <strain>97-27</strain>
    </source>
</reference>
<feature type="chain" id="PRO_0000160989" description="Histidine ammonia-lyase">
    <location>
        <begin position="1"/>
        <end position="505"/>
    </location>
</feature>
<feature type="modified residue" description="2,3-didehydroalanine (Ser)" evidence="1">
    <location>
        <position position="142"/>
    </location>
</feature>
<feature type="cross-link" description="5-imidazolinone (Ala-Gly)" evidence="1">
    <location>
        <begin position="141"/>
        <end position="143"/>
    </location>
</feature>
<dbReference type="EC" id="4.3.1.3" evidence="1"/>
<dbReference type="EMBL" id="AE017355">
    <property type="protein sequence ID" value="AAT60512.1"/>
    <property type="molecule type" value="Genomic_DNA"/>
</dbReference>
<dbReference type="RefSeq" id="WP_000631841.1">
    <property type="nucleotide sequence ID" value="NC_005957.1"/>
</dbReference>
<dbReference type="RefSeq" id="YP_037727.1">
    <property type="nucleotide sequence ID" value="NC_005957.1"/>
</dbReference>
<dbReference type="SMR" id="Q6HFE9"/>
<dbReference type="KEGG" id="btk:BT9727_3405"/>
<dbReference type="PATRIC" id="fig|281309.8.peg.3632"/>
<dbReference type="HOGENOM" id="CLU_014801_4_0_9"/>
<dbReference type="UniPathway" id="UPA00379">
    <property type="reaction ID" value="UER00549"/>
</dbReference>
<dbReference type="Proteomes" id="UP000001301">
    <property type="component" value="Chromosome"/>
</dbReference>
<dbReference type="GO" id="GO:0005737">
    <property type="term" value="C:cytoplasm"/>
    <property type="evidence" value="ECO:0007669"/>
    <property type="project" value="UniProtKB-SubCell"/>
</dbReference>
<dbReference type="GO" id="GO:0004397">
    <property type="term" value="F:histidine ammonia-lyase activity"/>
    <property type="evidence" value="ECO:0007669"/>
    <property type="project" value="UniProtKB-UniRule"/>
</dbReference>
<dbReference type="GO" id="GO:0019556">
    <property type="term" value="P:L-histidine catabolic process to glutamate and formamide"/>
    <property type="evidence" value="ECO:0007669"/>
    <property type="project" value="UniProtKB-UniPathway"/>
</dbReference>
<dbReference type="GO" id="GO:0019557">
    <property type="term" value="P:L-histidine catabolic process to glutamate and formate"/>
    <property type="evidence" value="ECO:0007669"/>
    <property type="project" value="UniProtKB-UniPathway"/>
</dbReference>
<dbReference type="CDD" id="cd00332">
    <property type="entry name" value="PAL-HAL"/>
    <property type="match status" value="1"/>
</dbReference>
<dbReference type="FunFam" id="1.10.275.10:FF:000008">
    <property type="entry name" value="Histidine ammonia-lyase"/>
    <property type="match status" value="1"/>
</dbReference>
<dbReference type="FunFam" id="1.20.200.10:FF:000003">
    <property type="entry name" value="Histidine ammonia-lyase"/>
    <property type="match status" value="1"/>
</dbReference>
<dbReference type="Gene3D" id="1.20.200.10">
    <property type="entry name" value="Fumarase/aspartase (Central domain)"/>
    <property type="match status" value="1"/>
</dbReference>
<dbReference type="Gene3D" id="1.10.275.10">
    <property type="entry name" value="Fumarase/aspartase (N-terminal domain)"/>
    <property type="match status" value="1"/>
</dbReference>
<dbReference type="HAMAP" id="MF_00229">
    <property type="entry name" value="His_ammonia_lyase"/>
    <property type="match status" value="1"/>
</dbReference>
<dbReference type="InterPro" id="IPR001106">
    <property type="entry name" value="Aromatic_Lyase"/>
</dbReference>
<dbReference type="InterPro" id="IPR024083">
    <property type="entry name" value="Fumarase/histidase_N"/>
</dbReference>
<dbReference type="InterPro" id="IPR005921">
    <property type="entry name" value="HutH"/>
</dbReference>
<dbReference type="InterPro" id="IPR008948">
    <property type="entry name" value="L-Aspartase-like"/>
</dbReference>
<dbReference type="InterPro" id="IPR022313">
    <property type="entry name" value="Phe/His_NH3-lyase_AS"/>
</dbReference>
<dbReference type="NCBIfam" id="TIGR01225">
    <property type="entry name" value="hutH"/>
    <property type="match status" value="1"/>
</dbReference>
<dbReference type="NCBIfam" id="NF006871">
    <property type="entry name" value="PRK09367.1"/>
    <property type="match status" value="1"/>
</dbReference>
<dbReference type="PANTHER" id="PTHR10362">
    <property type="entry name" value="HISTIDINE AMMONIA-LYASE"/>
    <property type="match status" value="1"/>
</dbReference>
<dbReference type="Pfam" id="PF00221">
    <property type="entry name" value="Lyase_aromatic"/>
    <property type="match status" value="1"/>
</dbReference>
<dbReference type="SUPFAM" id="SSF48557">
    <property type="entry name" value="L-aspartase-like"/>
    <property type="match status" value="1"/>
</dbReference>
<dbReference type="PROSITE" id="PS00488">
    <property type="entry name" value="PAL_HISTIDASE"/>
    <property type="match status" value="1"/>
</dbReference>
<organism>
    <name type="scientific">Bacillus thuringiensis subsp. konkukian (strain 97-27)</name>
    <dbReference type="NCBI Taxonomy" id="281309"/>
    <lineage>
        <taxon>Bacteria</taxon>
        <taxon>Bacillati</taxon>
        <taxon>Bacillota</taxon>
        <taxon>Bacilli</taxon>
        <taxon>Bacillales</taxon>
        <taxon>Bacillaceae</taxon>
        <taxon>Bacillus</taxon>
        <taxon>Bacillus cereus group</taxon>
    </lineage>
</organism>
<sequence length="505" mass="55442">MITLTGHTLTIEEMKRLLLEGEGVTACPNSMQKVAECREVVEKIVEDGKVVYGITTGFGKFSDVLIQKDDVKALQHNLIQSHACGIGDPFPEEVSRGMLILRANTMLKGVSGVRPLVVNMLLEFVNRKIHPVVPQQGSLGASGDLAPLSHLALVLLGEGEVFYKGKRVHAMVALTEEGLEPIELEAKEGLALINGTQAMTAQGVLSYIEAEATAYQAEFIASMTIEGLQGIIDAFDENVHKARGYKEQVEVASRIRDILHDSKLTTKQGKLRVQDAYSLRCIPQVHGASWQVLNYVKEKLEIEMNAATDNPLIFDGGEKVISGGNFHGQPIAFAMDFLKVGMAELANISERRIERLVNPQLNDLPPFLSPEPGLQSGAMIMQYAAASLVSENKTLAHPASVDSIPSSANQEDHVSMGTIASRHAHQIIQNVRRVLSIEMICAMQAAEYRGIENMSTVTKSFYHQGRQQVPSITNDRIFSTDIENIAYWLKTNYSIKERLDVNAAL</sequence>
<protein>
    <recommendedName>
        <fullName evidence="1">Histidine ammonia-lyase</fullName>
        <shortName evidence="1">Histidase</shortName>
        <ecNumber evidence="1">4.3.1.3</ecNumber>
    </recommendedName>
</protein>
<keyword id="KW-0963">Cytoplasm</keyword>
<keyword id="KW-0369">Histidine metabolism</keyword>
<keyword id="KW-0456">Lyase</keyword>
<evidence type="ECO:0000255" key="1">
    <source>
        <dbReference type="HAMAP-Rule" id="MF_00229"/>
    </source>
</evidence>
<proteinExistence type="inferred from homology"/>
<name>HUTH_BACHK</name>
<gene>
    <name evidence="1" type="primary">hutH</name>
    <name type="ordered locus">BT9727_3405</name>
</gene>